<dbReference type="EMBL" id="BK000517">
    <property type="protein sequence ID" value="DAA00365.1"/>
    <property type="molecule type" value="mRNA"/>
</dbReference>
<dbReference type="EMBL" id="AC073943">
    <property type="protein sequence ID" value="AAG50951.1"/>
    <property type="status" value="ALT_SEQ"/>
    <property type="molecule type" value="Genomic_DNA"/>
</dbReference>
<dbReference type="EMBL" id="AC079131">
    <property type="protein sequence ID" value="AAG50770.1"/>
    <property type="status" value="ALT_SEQ"/>
    <property type="molecule type" value="Genomic_DNA"/>
</dbReference>
<dbReference type="EMBL" id="CP002684">
    <property type="protein sequence ID" value="AEE33523.1"/>
    <property type="status" value="ALT_SEQ"/>
    <property type="molecule type" value="Genomic_DNA"/>
</dbReference>
<dbReference type="EMBL" id="AH006602">
    <property type="protein sequence ID" value="AAC49734.1"/>
    <property type="molecule type" value="Genomic_DNA"/>
</dbReference>
<dbReference type="EMBL" id="AK229585">
    <property type="protein sequence ID" value="BAF01434.1"/>
    <property type="status" value="ALT_FRAME"/>
    <property type="molecule type" value="mRNA"/>
</dbReference>
<dbReference type="PIR" id="A96616">
    <property type="entry name" value="A96616"/>
</dbReference>
<dbReference type="RefSeq" id="NP_176121.3">
    <property type="nucleotide sequence ID" value="NM_104605.4"/>
</dbReference>
<dbReference type="SMR" id="Q6IMT1"/>
<dbReference type="FunCoup" id="Q6IMT1">
    <property type="interactions" value="2697"/>
</dbReference>
<dbReference type="STRING" id="3702.Q6IMT1"/>
<dbReference type="GlyCosmos" id="Q6IMT1">
    <property type="glycosylation" value="15 sites, No reported glycans"/>
</dbReference>
<dbReference type="GlyGen" id="Q6IMT1">
    <property type="glycosylation" value="16 sites"/>
</dbReference>
<dbReference type="PaxDb" id="3702-AT1G58250.2"/>
<dbReference type="ProteomicsDB" id="226682">
    <molecule id="Q6IMT1-1"/>
</dbReference>
<dbReference type="GeneID" id="842193"/>
<dbReference type="KEGG" id="ath:AT1G58250"/>
<dbReference type="Araport" id="AT1G58250"/>
<dbReference type="TAIR" id="AT1G58250">
    <property type="gene designation" value="SAB"/>
</dbReference>
<dbReference type="eggNOG" id="KOG1910">
    <property type="taxonomic scope" value="Eukaryota"/>
</dbReference>
<dbReference type="InParanoid" id="Q6IMT1"/>
<dbReference type="PRO" id="PR:Q6IMT1"/>
<dbReference type="Proteomes" id="UP000006548">
    <property type="component" value="Chromosome 1"/>
</dbReference>
<dbReference type="ExpressionAtlas" id="Q6IMT1">
    <property type="expression patterns" value="baseline and differential"/>
</dbReference>
<dbReference type="GO" id="GO:0005576">
    <property type="term" value="C:extracellular region"/>
    <property type="evidence" value="ECO:0007669"/>
    <property type="project" value="UniProtKB-SubCell"/>
</dbReference>
<dbReference type="GO" id="GO:0005794">
    <property type="term" value="C:Golgi apparatus"/>
    <property type="evidence" value="ECO:0007669"/>
    <property type="project" value="UniProtKB-SubCell"/>
</dbReference>
<dbReference type="GO" id="GO:0016036">
    <property type="term" value="P:cellular response to phosphate starvation"/>
    <property type="evidence" value="ECO:0000315"/>
    <property type="project" value="UniProtKB"/>
</dbReference>
<dbReference type="GO" id="GO:0010105">
    <property type="term" value="P:negative regulation of ethylene-activated signaling pathway"/>
    <property type="evidence" value="ECO:0000315"/>
    <property type="project" value="UniProtKB"/>
</dbReference>
<dbReference type="GO" id="GO:0030307">
    <property type="term" value="P:positive regulation of cell growth"/>
    <property type="evidence" value="ECO:0000315"/>
    <property type="project" value="UniProtKB"/>
</dbReference>
<dbReference type="InterPro" id="IPR019441">
    <property type="entry name" value="FMP27/BLTP2/Hobbit_GFWDK_RBG"/>
</dbReference>
<dbReference type="InterPro" id="IPR045167">
    <property type="entry name" value="Hobbit"/>
</dbReference>
<dbReference type="PANTHER" id="PTHR15678">
    <property type="entry name" value="ANTIGEN MLAA-22-RELATED"/>
    <property type="match status" value="1"/>
</dbReference>
<dbReference type="PANTHER" id="PTHR15678:SF6">
    <property type="entry name" value="BRIDGE-LIKE LIPID TRANSFER PROTEIN FAMILY MEMBER 2"/>
    <property type="match status" value="1"/>
</dbReference>
<dbReference type="Pfam" id="PF10344">
    <property type="entry name" value="Hobbit"/>
    <property type="match status" value="1"/>
</dbReference>
<dbReference type="SMART" id="SM01214">
    <property type="entry name" value="Fmp27_GFWDK"/>
    <property type="match status" value="1"/>
</dbReference>
<proteinExistence type="evidence at protein level"/>
<comment type="function">
    <text evidence="1 6 7 8 9">May be involved in membrane trafficking (By similarity). Required for cell expansion, especially in root cortex, probably by counteracting the action of ethylene in promoting cells radial expansion (PubMed:7867930, PubMed:8275864). Involved in female organ development (PubMed:14675453). Antagonistically interacts with ethylene signaling to regulate plant responses to Pi starvation (PubMed:22615140).</text>
</comment>
<comment type="subcellular location">
    <subcellularLocation>
        <location evidence="2">Secreted</location>
    </subcellularLocation>
    <subcellularLocation>
        <location evidence="1">Golgi apparatus</location>
    </subcellularLocation>
</comment>
<comment type="alternative products">
    <event type="alternative splicing"/>
    <isoform>
        <id>Q6IMT1-1</id>
        <name>1</name>
        <sequence type="displayed"/>
    </isoform>
    <text evidence="12">Additional isoforms seem to exist.</text>
</comment>
<comment type="tissue specificity">
    <text evidence="7">Highest levels in leaves, also expressed in leaves, flowers, and siliques, and, to a lower extent, in roots and stems.</text>
</comment>
<comment type="developmental stage">
    <text evidence="7">In seedlings, expressed in hypocotyl and in the entire cotyledon. Observed in all types of cells in the root apex, but restricted to vascular tissue in the upper part of the root. Stronger expression in young leaves than in old leaves. Accumulates in all flower organs, including the sepal, petal, stamen, and gynoecium. In the silique, high levels at both ends but weak in the middle.</text>
</comment>
<comment type="disruption phenotype">
    <text evidence="6 7 8 9">Dwarf plants; smaller aerial organs and wider roots because of abnormal diffuse cell growth. Abnormal cell expansion that is greatest in the root cortex cell layer and is independent of the root growth rate, and that leads to a shift in the orientation of expansion (PubMed:7867930, PubMed:8275864). Sterility due to female organ anomalies (PubMed:14675453, PubMed:8275864). Enhanced responses to Pi starvation (PubMed:22615140).</text>
</comment>
<comment type="miscellaneous">
    <text>The sequence shown here is derived from an EMBL/GenBank/DDBJ third party annotation (TPA) entry.</text>
</comment>
<comment type="similarity">
    <text evidence="12">Belongs to the SABRE family.</text>
</comment>
<comment type="sequence caution" evidence="12">
    <conflict type="erroneous gene model prediction">
        <sequence resource="EMBL-CDS" id="AAG50770"/>
    </conflict>
</comment>
<comment type="sequence caution" evidence="12">
    <conflict type="erroneous gene model prediction">
        <sequence resource="EMBL-CDS" id="AAG50951"/>
    </conflict>
</comment>
<comment type="sequence caution" evidence="12">
    <conflict type="erroneous gene model prediction">
        <sequence resource="EMBL-CDS" id="AEE33523"/>
    </conflict>
</comment>
<comment type="sequence caution" evidence="12">
    <conflict type="frameshift">
        <sequence resource="EMBL-CDS" id="BAF01434"/>
    </conflict>
</comment>
<protein>
    <recommendedName>
        <fullName evidence="11">Protein SABRE</fullName>
    </recommendedName>
    <alternativeName>
        <fullName evidence="10">Protein HYPERSENSITIVE TO PI STARVATION 4</fullName>
    </alternativeName>
</protein>
<reference key="1">
    <citation type="journal article" date="2003" name="Plant J.">
        <title>KINKY POLLEN encodes a SABRE-like protein required for tip growth in Arabidopsis and conserved among eukaryotes.</title>
        <authorList>
            <person name="Procissi A."/>
            <person name="Guyon A."/>
            <person name="Pierson E.S."/>
            <person name="Giritch A."/>
            <person name="Knuiman B."/>
            <person name="Grandjean O."/>
            <person name="Tonelli C."/>
            <person name="Derksen J."/>
            <person name="Pelletier G."/>
            <person name="Bonhomme S."/>
        </authorList>
    </citation>
    <scope>NUCLEOTIDE SEQUENCE [MRNA]</scope>
    <scope>FUNCTION</scope>
    <scope>DISRUPTION PHENOTYPE</scope>
</reference>
<reference key="2">
    <citation type="journal article" date="2000" name="Nature">
        <title>Sequence and analysis of chromosome 1 of the plant Arabidopsis thaliana.</title>
        <authorList>
            <person name="Theologis A."/>
            <person name="Ecker J.R."/>
            <person name="Palm C.J."/>
            <person name="Federspiel N.A."/>
            <person name="Kaul S."/>
            <person name="White O."/>
            <person name="Alonso J."/>
            <person name="Altafi H."/>
            <person name="Araujo R."/>
            <person name="Bowman C.L."/>
            <person name="Brooks S.Y."/>
            <person name="Buehler E."/>
            <person name="Chan A."/>
            <person name="Chao Q."/>
            <person name="Chen H."/>
            <person name="Cheuk R.F."/>
            <person name="Chin C.W."/>
            <person name="Chung M.K."/>
            <person name="Conn L."/>
            <person name="Conway A.B."/>
            <person name="Conway A.R."/>
            <person name="Creasy T.H."/>
            <person name="Dewar K."/>
            <person name="Dunn P."/>
            <person name="Etgu P."/>
            <person name="Feldblyum T.V."/>
            <person name="Feng J.-D."/>
            <person name="Fong B."/>
            <person name="Fujii C.Y."/>
            <person name="Gill J.E."/>
            <person name="Goldsmith A.D."/>
            <person name="Haas B."/>
            <person name="Hansen N.F."/>
            <person name="Hughes B."/>
            <person name="Huizar L."/>
            <person name="Hunter J.L."/>
            <person name="Jenkins J."/>
            <person name="Johnson-Hopson C."/>
            <person name="Khan S."/>
            <person name="Khaykin E."/>
            <person name="Kim C.J."/>
            <person name="Koo H.L."/>
            <person name="Kremenetskaia I."/>
            <person name="Kurtz D.B."/>
            <person name="Kwan A."/>
            <person name="Lam B."/>
            <person name="Langin-Hooper S."/>
            <person name="Lee A."/>
            <person name="Lee J.M."/>
            <person name="Lenz C.A."/>
            <person name="Li J.H."/>
            <person name="Li Y.-P."/>
            <person name="Lin X."/>
            <person name="Liu S.X."/>
            <person name="Liu Z.A."/>
            <person name="Luros J.S."/>
            <person name="Maiti R."/>
            <person name="Marziali A."/>
            <person name="Militscher J."/>
            <person name="Miranda M."/>
            <person name="Nguyen M."/>
            <person name="Nierman W.C."/>
            <person name="Osborne B.I."/>
            <person name="Pai G."/>
            <person name="Peterson J."/>
            <person name="Pham P.K."/>
            <person name="Rizzo M."/>
            <person name="Rooney T."/>
            <person name="Rowley D."/>
            <person name="Sakano H."/>
            <person name="Salzberg S.L."/>
            <person name="Schwartz J.R."/>
            <person name="Shinn P."/>
            <person name="Southwick A.M."/>
            <person name="Sun H."/>
            <person name="Tallon L.J."/>
            <person name="Tambunga G."/>
            <person name="Toriumi M.J."/>
            <person name="Town C.D."/>
            <person name="Utterback T."/>
            <person name="Van Aken S."/>
            <person name="Vaysberg M."/>
            <person name="Vysotskaia V.S."/>
            <person name="Walker M."/>
            <person name="Wu D."/>
            <person name="Yu G."/>
            <person name="Fraser C.M."/>
            <person name="Venter J.C."/>
            <person name="Davis R.W."/>
        </authorList>
    </citation>
    <scope>NUCLEOTIDE SEQUENCE [LARGE SCALE GENOMIC DNA]</scope>
    <source>
        <strain>cv. Columbia</strain>
    </source>
</reference>
<reference key="3">
    <citation type="journal article" date="2017" name="Plant J.">
        <title>Araport11: a complete reannotation of the Arabidopsis thaliana reference genome.</title>
        <authorList>
            <person name="Cheng C.Y."/>
            <person name="Krishnakumar V."/>
            <person name="Chan A.P."/>
            <person name="Thibaud-Nissen F."/>
            <person name="Schobel S."/>
            <person name="Town C.D."/>
        </authorList>
    </citation>
    <scope>GENOME REANNOTATION</scope>
    <scope>SEQUENCE REVISION</scope>
    <source>
        <strain>cv. Columbia</strain>
    </source>
</reference>
<reference key="4">
    <citation type="journal article" date="1995" name="Genes Dev.">
        <title>The SABRE gene is required for normal cell expansion in Arabidopsis.</title>
        <authorList>
            <person name="Aeschbacher R.A."/>
            <person name="Hauser M.-T."/>
            <person name="Feldmann K.A."/>
            <person name="Benfey P.N."/>
        </authorList>
    </citation>
    <scope>NUCLEOTIDE SEQUENCE [GENOMIC DNA] OF 1257-2603</scope>
    <scope>FUNCTION</scope>
    <scope>DISRUPTION PHENOTYPE</scope>
    <source>
        <strain>cv. Wassilewskija</strain>
    </source>
</reference>
<reference key="5">
    <citation type="submission" date="2006-07" db="EMBL/GenBank/DDBJ databases">
        <title>Large-scale analysis of RIKEN Arabidopsis full-length (RAFL) cDNAs.</title>
        <authorList>
            <person name="Totoki Y."/>
            <person name="Seki M."/>
            <person name="Ishida J."/>
            <person name="Nakajima M."/>
            <person name="Enju A."/>
            <person name="Kamiya A."/>
            <person name="Narusaka M."/>
            <person name="Shin-i T."/>
            <person name="Nakagawa M."/>
            <person name="Sakamoto N."/>
            <person name="Oishi K."/>
            <person name="Kohara Y."/>
            <person name="Kobayashi M."/>
            <person name="Toyoda A."/>
            <person name="Sakaki Y."/>
            <person name="Sakurai T."/>
            <person name="Iida K."/>
            <person name="Akiyama K."/>
            <person name="Satou M."/>
            <person name="Toyoda T."/>
            <person name="Konagaya A."/>
            <person name="Carninci P."/>
            <person name="Kawai J."/>
            <person name="Hayashizaki Y."/>
            <person name="Shinozaki K."/>
        </authorList>
    </citation>
    <scope>NUCLEOTIDE SEQUENCE [LARGE SCALE MRNA] OF 2051-2603</scope>
    <source>
        <strain>cv. Columbia</strain>
    </source>
</reference>
<reference key="6">
    <citation type="journal article" date="1993" name="Development">
        <title>Root development in Arabidopsis: four mutants with dramatically altered root morphogenesis.</title>
        <authorList>
            <person name="Benfey P.N."/>
            <person name="Linstead P.J."/>
            <person name="Roberts K."/>
            <person name="Schiefelbein J.W."/>
            <person name="Hauser M.-T."/>
            <person name="Aeschbacher R.A."/>
        </authorList>
    </citation>
    <scope>FUNCTION</scope>
    <scope>DISRUPTION PHENOTYPE</scope>
</reference>
<reference key="7">
    <citation type="journal article" date="2012" name="J. Exp. Bot.">
        <title>HPS4/SABRE regulates plant responses to phosphate starvation through antagonistic interaction with ethylene signalling.</title>
        <authorList>
            <person name="Yu H."/>
            <person name="Luo N."/>
            <person name="Sun L."/>
            <person name="Liu D."/>
        </authorList>
    </citation>
    <scope>FUNCTION</scope>
    <scope>MUTAGENESIS OF ALA-2118</scope>
    <scope>DISRUPTION PHENOTYPE</scope>
    <scope>TISSUE SPECIFICITY</scope>
    <source>
        <strain>cv. Columbia</strain>
    </source>
</reference>
<feature type="signal peptide" evidence="3">
    <location>
        <begin position="1"/>
        <end position="35"/>
    </location>
</feature>
<feature type="chain" id="PRO_0000432482" description="Protein SABRE" evidence="3">
    <location>
        <begin position="36"/>
        <end position="2603"/>
    </location>
</feature>
<feature type="region of interest" description="Disordered" evidence="5">
    <location>
        <begin position="259"/>
        <end position="287"/>
    </location>
</feature>
<feature type="region of interest" description="Disordered" evidence="5">
    <location>
        <begin position="786"/>
        <end position="814"/>
    </location>
</feature>
<feature type="region of interest" description="Disordered" evidence="5">
    <location>
        <begin position="1416"/>
        <end position="1436"/>
    </location>
</feature>
<feature type="region of interest" description="Disordered" evidence="5">
    <location>
        <begin position="1656"/>
        <end position="1676"/>
    </location>
</feature>
<feature type="region of interest" description="Disordered" evidence="5">
    <location>
        <begin position="1717"/>
        <end position="1777"/>
    </location>
</feature>
<feature type="region of interest" description="Disordered" evidence="5">
    <location>
        <begin position="2339"/>
        <end position="2380"/>
    </location>
</feature>
<feature type="region of interest" description="Disordered" evidence="5">
    <location>
        <begin position="2448"/>
        <end position="2479"/>
    </location>
</feature>
<feature type="region of interest" description="Disordered" evidence="5">
    <location>
        <begin position="2554"/>
        <end position="2603"/>
    </location>
</feature>
<feature type="coiled-coil region" evidence="3">
    <location>
        <begin position="1995"/>
        <end position="2023"/>
    </location>
</feature>
<feature type="compositionally biased region" description="Basic and acidic residues" evidence="5">
    <location>
        <begin position="1731"/>
        <end position="1748"/>
    </location>
</feature>
<feature type="compositionally biased region" description="Polar residues" evidence="5">
    <location>
        <begin position="1749"/>
        <end position="1766"/>
    </location>
</feature>
<feature type="compositionally biased region" description="Basic and acidic residues" evidence="5">
    <location>
        <begin position="2343"/>
        <end position="2380"/>
    </location>
</feature>
<feature type="compositionally biased region" description="Basic residues" evidence="5">
    <location>
        <begin position="2554"/>
        <end position="2565"/>
    </location>
</feature>
<feature type="compositionally biased region" description="Polar residues" evidence="5">
    <location>
        <begin position="2566"/>
        <end position="2583"/>
    </location>
</feature>
<feature type="compositionally biased region" description="Low complexity" evidence="5">
    <location>
        <begin position="2586"/>
        <end position="2603"/>
    </location>
</feature>
<feature type="glycosylation site" description="N-linked (GlcNAc...) asparagine" evidence="4">
    <location>
        <position position="196"/>
    </location>
</feature>
<feature type="glycosylation site" description="N-linked (GlcNAc...) asparagine" evidence="4">
    <location>
        <position position="331"/>
    </location>
</feature>
<feature type="glycosylation site" description="N-linked (GlcNAc...) asparagine" evidence="4">
    <location>
        <position position="486"/>
    </location>
</feature>
<feature type="glycosylation site" description="N-linked (GlcNAc...) asparagine" evidence="4">
    <location>
        <position position="597"/>
    </location>
</feature>
<feature type="glycosylation site" description="N-linked (GlcNAc...) asparagine" evidence="4">
    <location>
        <position position="807"/>
    </location>
</feature>
<feature type="glycosylation site" description="N-linked (GlcNAc...) asparagine" evidence="4">
    <location>
        <position position="867"/>
    </location>
</feature>
<feature type="glycosylation site" description="N-linked (GlcNAc...) asparagine" evidence="4">
    <location>
        <position position="887"/>
    </location>
</feature>
<feature type="glycosylation site" description="N-linked (GlcNAc...) asparagine" evidence="4">
    <location>
        <position position="1154"/>
    </location>
</feature>
<feature type="glycosylation site" description="N-linked (GlcNAc...) asparagine" evidence="4">
    <location>
        <position position="1249"/>
    </location>
</feature>
<feature type="glycosylation site" description="N-linked (GlcNAc...) asparagine" evidence="4">
    <location>
        <position position="1280"/>
    </location>
</feature>
<feature type="glycosylation site" description="N-linked (GlcNAc...) asparagine" evidence="4">
    <location>
        <position position="1408"/>
    </location>
</feature>
<feature type="glycosylation site" description="N-linked (GlcNAc...) asparagine" evidence="4">
    <location>
        <position position="1492"/>
    </location>
</feature>
<feature type="glycosylation site" description="N-linked (GlcNAc...) asparagine" evidence="4">
    <location>
        <position position="1659"/>
    </location>
</feature>
<feature type="glycosylation site" description="N-linked (GlcNAc...) asparagine" evidence="4">
    <location>
        <position position="2333"/>
    </location>
</feature>
<feature type="glycosylation site" description="N-linked (GlcNAc...) asparagine" evidence="4">
    <location>
        <position position="2467"/>
    </location>
</feature>
<feature type="mutagenesis site" description="In hps4; enhanced responses to Pi starvation, including increased inhibition of primary root growth, probably due to an increased auxin accumulation in root tips, enhanced expression of Pi starvation-induced genes, and overproduction of root-associated acid phosphatases (APase)." evidence="7">
    <original>A</original>
    <variation>P</variation>
    <location>
        <position position="2118"/>
    </location>
</feature>
<feature type="sequence conflict" description="In Ref. 4; AAC49734." evidence="12" ref="4">
    <original>K</original>
    <variation>N</variation>
    <location>
        <position position="1898"/>
    </location>
</feature>
<feature type="sequence conflict" description="In Ref. 4; AAC49734." evidence="12" ref="4">
    <original>A</original>
    <variation>S</variation>
    <location>
        <position position="2239"/>
    </location>
</feature>
<feature type="sequence conflict" description="In Ref. 5; BAF01434." evidence="12" ref="5">
    <original>N</original>
    <variation>D</variation>
    <location>
        <position position="2464"/>
    </location>
</feature>
<sequence length="2603" mass="292913">MAASPAKFFFGFLIVSIVLWMIFMLFAWMLSRVLGASVVFRVGGWKCLKDVVVKFKKGAIESVSASEIKLSLRQSLVKLGVGFLSRDPKVQVLISDLEVVMRSSTSTTNLQKAKSHKPRTSGRGKWMVVANVARFLSVSVADMVVKTTKVIVEVKELKLDINKDGGTKPNLYVKLNVLPILVHLCESRIISDQSSNVSFECCPASQASSASPDRSAATLFCDELSLSSEFGHDRAVGIVVRNVEVTSGDVILNFDEDSFPKSKQSSASLRSDEVRTSATAASSAKKPHKEHQLVAALAKYSSSFPEKVSFSLPKLDVRCVNREHDLLAENNITGIQLRSVKSKSFEDTGESTRLDVQMELSEIHVFREADSSILEIMKVDVVSFIYIPVQPVLPIRAEVDIKLGGTRCNLFISRLQPWLRLHFLKKKKLVLQEKTHNLEKTKAADMKAIMWTGTVSAPEMTVMLYGTEDIPLYHFCSQSSHVFANNVSSLGTAVHVELGELNLHLADEYQECFREHLFGIEPNSGSLMHIAKVSLDWGRRDRTSSDEVGFRSKLVLSVDVTGMGIYFSFKRVQSLIINALSFKALFKTLSVTGKKMNKTVSVQPSKGSGKGTRLVNINLERCCVNFCDDTGLDNTVIDDPKSVNYGSQGGRVSFSSLADGTPRTASILSTAPEACKRLKYSVSLEISQFSFCLNKDKLSTQMELGRAKSIYQEYLEEHTPCSNVILFDMHNAKLVRRSGGLNEIDVCSLFSATHISLGWEPDVHLSFYELFLRLRSLVYAQRHKEPESGCNKGISSVKDGGPSEKINQSNSVNKQKKKESMFAIDVETLTISAEVGDGVEVKLEAQSIFSENACIGVLLEGLMLAFNGSRVFKTTRMQVSRIPTATNLSDAVPVMTDGPWDWVVQGLDVHICMPYKLQLRAIDDSIEEMLRGLKLISVAKGKHILSGKRESSKPKKSSPKFGRIKFCIRRLTADIEEEPIQGWLDEHYQLVKKEACELAVRLKFLEDLIHKAGQSPKGAETSAVLDERKMFFDGVEIDVEDPVAINKVKEEIHKRSFQSYYQACQGLAPSEGSGACREGFQAGFKPSAARTSLLSVCATDFDLSLTAVHGGDAGLIEVLKKLDPICEENDIPFSRLYGSNVYLNTGSLVVQLRNYTLPLLSGTSGKCEGRIVLAQQATCFQPQISQDVFVGRWRKVKMFRSASGTTPPLKTYSDLRIHFEQGEVSFGVGYEPAFADISYAFTVALRRANLSHRNPDMVQVIKKERSLPWWDDMRNYVHGNITLSFSESKWSVLATTDPYESLDQLQIVSGPIELKQSDGRVFVSAKDFKIKLSSLESLISRHSLKVPVRASGAAFIEAPDFNLEVTMDWDCESGNSLNHYLYAFPAEGKPREKVFDPFRSTSLSLRWNFSLRPEKFHQSPSSTEHPTDVGTVYSSQDKPDSIPLASPTMNLGAHDLAWILKFWGLNYYPPHKLRSFSRWPRFGVPRAARSGNLSLDKVMTEFMLRVDATPSLIKYMPWDSDDPAKGLTFNMAKLKYELCYSRGKQKYTFECKRDALDLVYQGLDLHVPKAFINKDEHPCIPGSVQVLRKSTQDALIDRVPSGKDHKRYEKHRDEGFLLSSDYFTIRRQAPKADPERLLAWQEAGRRNLEMTYVRSEFENGSESDEHIRSDPSDDDGYNVVIADNCQRVFVYGLKLLWTIENRDAVWSFVGGISKAFEPPKPSPSRQYTQRKIHEENQKESCPETHQGEMSRSSASPGRNLPSSPSHSIKIEKSDDIGTVETIESEEEGTRHFMVNVIEPQFNLHSEEANGRFLLAAVSGRVLARSFHSIMRVGVEVIEQALGTGSVKIPECSPEMTWTRMEVSVMLEHVQAHVAPTDVDPGAGLQWLPKIRRNSPKVKRTGALLERVFMPCDMYFRYTRHKGGTPDLKVKPLKELTFNSHNIIATMTSRQFQVMLDVLTNLLFARLPKPRKSSLQCPTEDEDVEEEADEVVPYGVEEVELAKINLEEKERERKLLLDDIRKLSPCSDNMDDTHIEREGELWMISTRRSILVQGLKKELTYAQKSRKAASASLRMALQKAAQLRIMEKEKNKSPSYAMCISLQINKVVWSMLVDGKSFAEAEINDMIYDFDRDYKDIGVARFTTKYFVVRNCLPNAKSDMLLSAWNPPPEWGKKVMLRVDAKQGAPKDAHYPLELFHVEIYPLRIHLTETMYRMMWEYFFPEEEQDSQSRQEVWKISTTAGSKRVKKGLVGHESSGHAIKDVEASRMSSSALSASAAVQSQSNDDSVQKSNVICLRSSTGASAQELRRTSSFDREENVAEPIANELVLQAHSCNVSSSIEQQEDFSKQKVKEIKPVKSGRSSHEEKKAGKSHEEKKSRPRKMMEFHNIKISQVELLVTYEGSRFVVNDLKLLMDTFHRVEFTGTWRRLFSRVKKHIIWGVLKSVTGMQGKKFKDKSHNNRESTDNDLNLSDNDQTGKPDQQQVTWFKRQSDGAGDGFVTSIRGLFNTQRRKAKAFVLRTMRGEAENDFHGDWSDSDVEFSPFARQLTITKAKRLIRRHTKKFRPRSQRGSTSQQRESLPSSPIETTPFESGYSSGSSPYEDFRE</sequence>
<evidence type="ECO:0000250" key="1">
    <source>
        <dbReference type="UniProtKB" id="K7VLR4"/>
    </source>
</evidence>
<evidence type="ECO:0000250" key="2">
    <source>
        <dbReference type="UniProtKB" id="Q6IMT0"/>
    </source>
</evidence>
<evidence type="ECO:0000255" key="3"/>
<evidence type="ECO:0000255" key="4">
    <source>
        <dbReference type="PROSITE-ProRule" id="PRU00498"/>
    </source>
</evidence>
<evidence type="ECO:0000256" key="5">
    <source>
        <dbReference type="SAM" id="MobiDB-lite"/>
    </source>
</evidence>
<evidence type="ECO:0000269" key="6">
    <source>
    </source>
</evidence>
<evidence type="ECO:0000269" key="7">
    <source>
    </source>
</evidence>
<evidence type="ECO:0000269" key="8">
    <source>
    </source>
</evidence>
<evidence type="ECO:0000269" key="9">
    <source>
    </source>
</evidence>
<evidence type="ECO:0000303" key="10">
    <source>
    </source>
</evidence>
<evidence type="ECO:0000303" key="11">
    <source>
    </source>
</evidence>
<evidence type="ECO:0000305" key="12"/>
<evidence type="ECO:0000312" key="13">
    <source>
        <dbReference type="Araport" id="AT1G58250"/>
    </source>
</evidence>
<evidence type="ECO:0000312" key="14">
    <source>
        <dbReference type="EMBL" id="AAG50770.1"/>
    </source>
</evidence>
<evidence type="ECO:0000312" key="15">
    <source>
        <dbReference type="EMBL" id="AAG50951.1"/>
    </source>
</evidence>
<evidence type="ECO:0000312" key="16">
    <source>
        <dbReference type="EMBL" id="DAA00365.1"/>
    </source>
</evidence>
<gene>
    <name evidence="11" type="primary">SAB</name>
    <name evidence="10" type="synonym">HPS4</name>
    <name evidence="13" type="ordered locus">At1g58250</name>
    <name evidence="15" type="ORF">F16M22.5</name>
    <name evidence="14" type="ORF">T18I24.18</name>
</gene>
<name>SAB_ARATH</name>
<organism evidence="16">
    <name type="scientific">Arabidopsis thaliana</name>
    <name type="common">Mouse-ear cress</name>
    <dbReference type="NCBI Taxonomy" id="3702"/>
    <lineage>
        <taxon>Eukaryota</taxon>
        <taxon>Viridiplantae</taxon>
        <taxon>Streptophyta</taxon>
        <taxon>Embryophyta</taxon>
        <taxon>Tracheophyta</taxon>
        <taxon>Spermatophyta</taxon>
        <taxon>Magnoliopsida</taxon>
        <taxon>eudicotyledons</taxon>
        <taxon>Gunneridae</taxon>
        <taxon>Pentapetalae</taxon>
        <taxon>rosids</taxon>
        <taxon>malvids</taxon>
        <taxon>Brassicales</taxon>
        <taxon>Brassicaceae</taxon>
        <taxon>Camelineae</taxon>
        <taxon>Arabidopsis</taxon>
    </lineage>
</organism>
<accession>Q6IMT1</accession>
<accession>F4I9T5</accession>
<accession>Q0WN66</accession>
<accession>Q38969</accession>
<accession>Q9C6Q6</accession>
<accession>Q9C727</accession>
<keyword id="KW-0025">Alternative splicing</keyword>
<keyword id="KW-0175">Coiled coil</keyword>
<keyword id="KW-0217">Developmental protein</keyword>
<keyword id="KW-0325">Glycoprotein</keyword>
<keyword id="KW-0333">Golgi apparatus</keyword>
<keyword id="KW-1185">Reference proteome</keyword>
<keyword id="KW-0964">Secreted</keyword>
<keyword id="KW-0732">Signal</keyword>